<organism>
    <name type="scientific">Coccidioides immitis (strain RS)</name>
    <name type="common">Valley fever fungus</name>
    <dbReference type="NCBI Taxonomy" id="246410"/>
    <lineage>
        <taxon>Eukaryota</taxon>
        <taxon>Fungi</taxon>
        <taxon>Dikarya</taxon>
        <taxon>Ascomycota</taxon>
        <taxon>Pezizomycotina</taxon>
        <taxon>Eurotiomycetes</taxon>
        <taxon>Eurotiomycetidae</taxon>
        <taxon>Onygenales</taxon>
        <taxon>Onygenaceae</taxon>
        <taxon>Coccidioides</taxon>
    </lineage>
</organism>
<accession>Q1E554</accession>
<accession>J3KLG0</accession>
<sequence>MSSTEPAPAPAPEPAPAPAAAPAAAAAAPKGMRKNGKNWHDVKTPFRPTKGQTSYARRLEERKAMAAIKEKEKEMKEEKEAERQRRIQAIKDRRAAKEEKERYEKMAEKMHRKRVERRKRREKRNKLLNS</sequence>
<name>CGR1_COCIM</name>
<comment type="function">
    <text evidence="1">Involved in nucleolar integrity and required for processing of the pre-rRNA for the 60S ribosome subunit.</text>
</comment>
<comment type="subcellular location">
    <subcellularLocation>
        <location evidence="1">Nucleus</location>
        <location evidence="1">Nucleolus</location>
    </subcellularLocation>
</comment>
<comment type="similarity">
    <text evidence="4">Belongs to the CGR1 family.</text>
</comment>
<gene>
    <name type="primary">CGR1</name>
    <name type="ORF">CIMG_02309</name>
</gene>
<proteinExistence type="inferred from homology"/>
<reference key="1">
    <citation type="journal article" date="2009" name="Genome Res.">
        <title>Comparative genomic analyses of the human fungal pathogens Coccidioides and their relatives.</title>
        <authorList>
            <person name="Sharpton T.J."/>
            <person name="Stajich J.E."/>
            <person name="Rounsley S.D."/>
            <person name="Gardner M.J."/>
            <person name="Wortman J.R."/>
            <person name="Jordar V.S."/>
            <person name="Maiti R."/>
            <person name="Kodira C.D."/>
            <person name="Neafsey D.E."/>
            <person name="Zeng Q."/>
            <person name="Hung C.-Y."/>
            <person name="McMahan C."/>
            <person name="Muszewska A."/>
            <person name="Grynberg M."/>
            <person name="Mandel M.A."/>
            <person name="Kellner E.M."/>
            <person name="Barker B.M."/>
            <person name="Galgiani J.N."/>
            <person name="Orbach M.J."/>
            <person name="Kirkland T.N."/>
            <person name="Cole G.T."/>
            <person name="Henn M.R."/>
            <person name="Birren B.W."/>
            <person name="Taylor J.W."/>
        </authorList>
    </citation>
    <scope>NUCLEOTIDE SEQUENCE [LARGE SCALE GENOMIC DNA]</scope>
    <source>
        <strain>RS</strain>
    </source>
</reference>
<reference key="2">
    <citation type="journal article" date="2010" name="Genome Res.">
        <title>Population genomic sequencing of Coccidioides fungi reveals recent hybridization and transposon control.</title>
        <authorList>
            <person name="Neafsey D.E."/>
            <person name="Barker B.M."/>
            <person name="Sharpton T.J."/>
            <person name="Stajich J.E."/>
            <person name="Park D.J."/>
            <person name="Whiston E."/>
            <person name="Hung C.-Y."/>
            <person name="McMahan C."/>
            <person name="White J."/>
            <person name="Sykes S."/>
            <person name="Heiman D."/>
            <person name="Young S."/>
            <person name="Zeng Q."/>
            <person name="Abouelleil A."/>
            <person name="Aftuck L."/>
            <person name="Bessette D."/>
            <person name="Brown A."/>
            <person name="FitzGerald M."/>
            <person name="Lui A."/>
            <person name="Macdonald J.P."/>
            <person name="Priest M."/>
            <person name="Orbach M.J."/>
            <person name="Galgiani J.N."/>
            <person name="Kirkland T.N."/>
            <person name="Cole G.T."/>
            <person name="Birren B.W."/>
            <person name="Henn M.R."/>
            <person name="Taylor J.W."/>
            <person name="Rounsley S.D."/>
        </authorList>
    </citation>
    <scope>GENOME REANNOTATION</scope>
    <source>
        <strain>RS</strain>
    </source>
</reference>
<feature type="chain" id="PRO_0000278952" description="rRNA-processing protein CGR1">
    <location>
        <begin position="1"/>
        <end position="130"/>
    </location>
</feature>
<feature type="region of interest" description="Disordered" evidence="3">
    <location>
        <begin position="1"/>
        <end position="55"/>
    </location>
</feature>
<feature type="region of interest" description="Disordered" evidence="3">
    <location>
        <begin position="91"/>
        <end position="130"/>
    </location>
</feature>
<feature type="coiled-coil region" evidence="2">
    <location>
        <begin position="58"/>
        <end position="118"/>
    </location>
</feature>
<feature type="compositionally biased region" description="Pro residues" evidence="3">
    <location>
        <begin position="7"/>
        <end position="19"/>
    </location>
</feature>
<feature type="compositionally biased region" description="Low complexity" evidence="3">
    <location>
        <begin position="20"/>
        <end position="29"/>
    </location>
</feature>
<feature type="compositionally biased region" description="Basic and acidic residues" evidence="3">
    <location>
        <begin position="91"/>
        <end position="109"/>
    </location>
</feature>
<feature type="compositionally biased region" description="Basic residues" evidence="3">
    <location>
        <begin position="110"/>
        <end position="130"/>
    </location>
</feature>
<dbReference type="EMBL" id="GG704911">
    <property type="protein sequence ID" value="EAS36955.3"/>
    <property type="molecule type" value="Genomic_DNA"/>
</dbReference>
<dbReference type="RefSeq" id="XP_001248538.1">
    <property type="nucleotide sequence ID" value="XM_001248537.2"/>
</dbReference>
<dbReference type="SMR" id="Q1E554"/>
<dbReference type="STRING" id="246410.Q1E554"/>
<dbReference type="GeneID" id="4566752"/>
<dbReference type="KEGG" id="cim:CIMG_02309"/>
<dbReference type="VEuPathDB" id="FungiDB:CIMG_02309"/>
<dbReference type="InParanoid" id="Q1E554"/>
<dbReference type="OMA" id="NGKQWHD"/>
<dbReference type="OrthoDB" id="4207540at2759"/>
<dbReference type="Proteomes" id="UP000001261">
    <property type="component" value="Unassembled WGS sequence"/>
</dbReference>
<dbReference type="GO" id="GO:0005730">
    <property type="term" value="C:nucleolus"/>
    <property type="evidence" value="ECO:0007669"/>
    <property type="project" value="UniProtKB-SubCell"/>
</dbReference>
<dbReference type="GO" id="GO:0006364">
    <property type="term" value="P:rRNA processing"/>
    <property type="evidence" value="ECO:0007669"/>
    <property type="project" value="UniProtKB-KW"/>
</dbReference>
<dbReference type="InterPro" id="IPR005579">
    <property type="entry name" value="Cgr1-like"/>
</dbReference>
<dbReference type="Pfam" id="PF03879">
    <property type="entry name" value="Cgr1"/>
    <property type="match status" value="1"/>
</dbReference>
<evidence type="ECO:0000250" key="1"/>
<evidence type="ECO:0000255" key="2"/>
<evidence type="ECO:0000256" key="3">
    <source>
        <dbReference type="SAM" id="MobiDB-lite"/>
    </source>
</evidence>
<evidence type="ECO:0000305" key="4"/>
<protein>
    <recommendedName>
        <fullName>rRNA-processing protein CGR1</fullName>
    </recommendedName>
</protein>
<keyword id="KW-0175">Coiled coil</keyword>
<keyword id="KW-0539">Nucleus</keyword>
<keyword id="KW-1185">Reference proteome</keyword>
<keyword id="KW-0690">Ribosome biogenesis</keyword>
<keyword id="KW-0698">rRNA processing</keyword>